<evidence type="ECO:0000255" key="1">
    <source>
        <dbReference type="HAMAP-Rule" id="MF_00303"/>
    </source>
</evidence>
<accession>Q5HNM8</accession>
<comment type="function">
    <text evidence="1">Involved in protein export. Acts as a chaperone by maintaining the newly synthesized protein in an open conformation. Functions as a peptidyl-prolyl cis-trans isomerase.</text>
</comment>
<comment type="catalytic activity">
    <reaction evidence="1">
        <text>[protein]-peptidylproline (omega=180) = [protein]-peptidylproline (omega=0)</text>
        <dbReference type="Rhea" id="RHEA:16237"/>
        <dbReference type="Rhea" id="RHEA-COMP:10747"/>
        <dbReference type="Rhea" id="RHEA-COMP:10748"/>
        <dbReference type="ChEBI" id="CHEBI:83833"/>
        <dbReference type="ChEBI" id="CHEBI:83834"/>
        <dbReference type="EC" id="5.2.1.8"/>
    </reaction>
</comment>
<comment type="subcellular location">
    <subcellularLocation>
        <location>Cytoplasm</location>
    </subcellularLocation>
    <text evidence="1">About half TF is bound to the ribosome near the polypeptide exit tunnel while the other half is free in the cytoplasm.</text>
</comment>
<comment type="domain">
    <text evidence="1">Consists of 3 domains; the N-terminus binds the ribosome, the middle domain has PPIase activity, while the C-terminus has intrinsic chaperone activity on its own.</text>
</comment>
<comment type="similarity">
    <text evidence="1">Belongs to the FKBP-type PPIase family. Tig subfamily.</text>
</comment>
<feature type="chain" id="PRO_0000179432" description="Trigger factor">
    <location>
        <begin position="1"/>
        <end position="433"/>
    </location>
</feature>
<feature type="domain" description="PPIase FKBP-type" evidence="1">
    <location>
        <begin position="163"/>
        <end position="248"/>
    </location>
</feature>
<organism>
    <name type="scientific">Staphylococcus epidermidis (strain ATCC 35984 / DSM 28319 / BCRC 17069 / CCUG 31568 / BM 3577 / RP62A)</name>
    <dbReference type="NCBI Taxonomy" id="176279"/>
    <lineage>
        <taxon>Bacteria</taxon>
        <taxon>Bacillati</taxon>
        <taxon>Bacillota</taxon>
        <taxon>Bacilli</taxon>
        <taxon>Bacillales</taxon>
        <taxon>Staphylococcaceae</taxon>
        <taxon>Staphylococcus</taxon>
    </lineage>
</organism>
<proteinExistence type="inferred from homology"/>
<reference key="1">
    <citation type="journal article" date="2005" name="J. Bacteriol.">
        <title>Insights on evolution of virulence and resistance from the complete genome analysis of an early methicillin-resistant Staphylococcus aureus strain and a biofilm-producing methicillin-resistant Staphylococcus epidermidis strain.</title>
        <authorList>
            <person name="Gill S.R."/>
            <person name="Fouts D.E."/>
            <person name="Archer G.L."/>
            <person name="Mongodin E.F."/>
            <person name="DeBoy R.T."/>
            <person name="Ravel J."/>
            <person name="Paulsen I.T."/>
            <person name="Kolonay J.F."/>
            <person name="Brinkac L.M."/>
            <person name="Beanan M.J."/>
            <person name="Dodson R.J."/>
            <person name="Daugherty S.C."/>
            <person name="Madupu R."/>
            <person name="Angiuoli S.V."/>
            <person name="Durkin A.S."/>
            <person name="Haft D.H."/>
            <person name="Vamathevan J.J."/>
            <person name="Khouri H."/>
            <person name="Utterback T.R."/>
            <person name="Lee C."/>
            <person name="Dimitrov G."/>
            <person name="Jiang L."/>
            <person name="Qin H."/>
            <person name="Weidman J."/>
            <person name="Tran K."/>
            <person name="Kang K.H."/>
            <person name="Hance I.R."/>
            <person name="Nelson K.E."/>
            <person name="Fraser C.M."/>
        </authorList>
    </citation>
    <scope>NUCLEOTIDE SEQUENCE [LARGE SCALE GENOMIC DNA]</scope>
    <source>
        <strain>ATCC 35984 / DSM 28319 / BCRC 17069 / CCUG 31568 / BM 3577 / RP62A</strain>
    </source>
</reference>
<sequence>MTATWEKKEGNEGVLTVTVPAEKVNKALDQAFKKVVKQINVPGFRKGKVPRPIFEQRFGVEALYQDAVDILLPEAYGEAIEETEINPVAQPEVNVTQIEKGKDFIFEATVTVEPEVKLGDYKGLEIEKQETDLSDEELQESIDHSLSHLAEMVVKEDGAVENGDTVNIDFSGSVDGEEFDGGQAEGYDLEIGSGSFIPGFEEQIEGMKTGDEKDVVVTFPEEYHAEELAGKEATFKTKVNEIKFKDVPELNDEIANELDSDAENVDEYKENLRKRLSEQKATEAENTEKEEAINKATENASIDIPEAMINTELDRMIQEFGQRIQQQGLDLQTYYQISGQNEEQLRDQMKDDAEQRVKTNLTLTAIADEENIEVSDEDIDKELEKMSEQFNISVEDIKSTLGNTDIVKNDVRIQKVIDLLRDNAKYVEATKED</sequence>
<name>TIG_STAEQ</name>
<protein>
    <recommendedName>
        <fullName evidence="1">Trigger factor</fullName>
        <shortName evidence="1">TF</shortName>
        <ecNumber evidence="1">5.2.1.8</ecNumber>
    </recommendedName>
    <alternativeName>
        <fullName evidence="1">PPIase</fullName>
    </alternativeName>
</protein>
<dbReference type="EC" id="5.2.1.8" evidence="1"/>
<dbReference type="EMBL" id="CP000029">
    <property type="protein sequence ID" value="AAW54596.1"/>
    <property type="molecule type" value="Genomic_DNA"/>
</dbReference>
<dbReference type="RefSeq" id="WP_001830810.1">
    <property type="nucleotide sequence ID" value="NC_002976.3"/>
</dbReference>
<dbReference type="SMR" id="Q5HNM8"/>
<dbReference type="STRING" id="176279.SERP1239"/>
<dbReference type="GeneID" id="50018535"/>
<dbReference type="KEGG" id="ser:SERP1239"/>
<dbReference type="eggNOG" id="COG0544">
    <property type="taxonomic scope" value="Bacteria"/>
</dbReference>
<dbReference type="HOGENOM" id="CLU_033058_3_2_9"/>
<dbReference type="Proteomes" id="UP000000531">
    <property type="component" value="Chromosome"/>
</dbReference>
<dbReference type="GO" id="GO:0005737">
    <property type="term" value="C:cytoplasm"/>
    <property type="evidence" value="ECO:0007669"/>
    <property type="project" value="UniProtKB-SubCell"/>
</dbReference>
<dbReference type="GO" id="GO:0003755">
    <property type="term" value="F:peptidyl-prolyl cis-trans isomerase activity"/>
    <property type="evidence" value="ECO:0007669"/>
    <property type="project" value="UniProtKB-UniRule"/>
</dbReference>
<dbReference type="GO" id="GO:0044183">
    <property type="term" value="F:protein folding chaperone"/>
    <property type="evidence" value="ECO:0007669"/>
    <property type="project" value="TreeGrafter"/>
</dbReference>
<dbReference type="GO" id="GO:0043022">
    <property type="term" value="F:ribosome binding"/>
    <property type="evidence" value="ECO:0007669"/>
    <property type="project" value="TreeGrafter"/>
</dbReference>
<dbReference type="GO" id="GO:0051083">
    <property type="term" value="P:'de novo' cotranslational protein folding"/>
    <property type="evidence" value="ECO:0007669"/>
    <property type="project" value="TreeGrafter"/>
</dbReference>
<dbReference type="GO" id="GO:0051301">
    <property type="term" value="P:cell division"/>
    <property type="evidence" value="ECO:0007669"/>
    <property type="project" value="UniProtKB-KW"/>
</dbReference>
<dbReference type="GO" id="GO:0061077">
    <property type="term" value="P:chaperone-mediated protein folding"/>
    <property type="evidence" value="ECO:0007669"/>
    <property type="project" value="TreeGrafter"/>
</dbReference>
<dbReference type="GO" id="GO:0015031">
    <property type="term" value="P:protein transport"/>
    <property type="evidence" value="ECO:0007669"/>
    <property type="project" value="UniProtKB-UniRule"/>
</dbReference>
<dbReference type="GO" id="GO:0043335">
    <property type="term" value="P:protein unfolding"/>
    <property type="evidence" value="ECO:0007669"/>
    <property type="project" value="TreeGrafter"/>
</dbReference>
<dbReference type="FunFam" id="3.10.50.40:FF:000001">
    <property type="entry name" value="Trigger factor"/>
    <property type="match status" value="1"/>
</dbReference>
<dbReference type="FunFam" id="3.30.70.1050:FF:000002">
    <property type="entry name" value="Trigger factor"/>
    <property type="match status" value="1"/>
</dbReference>
<dbReference type="Gene3D" id="3.10.50.40">
    <property type="match status" value="1"/>
</dbReference>
<dbReference type="Gene3D" id="3.30.70.1050">
    <property type="entry name" value="Trigger factor ribosome-binding domain"/>
    <property type="match status" value="1"/>
</dbReference>
<dbReference type="Gene3D" id="1.10.3120.10">
    <property type="entry name" value="Trigger factor, C-terminal domain"/>
    <property type="match status" value="1"/>
</dbReference>
<dbReference type="HAMAP" id="MF_00303">
    <property type="entry name" value="Trigger_factor_Tig"/>
    <property type="match status" value="1"/>
</dbReference>
<dbReference type="InterPro" id="IPR046357">
    <property type="entry name" value="PPIase_dom_sf"/>
</dbReference>
<dbReference type="InterPro" id="IPR001179">
    <property type="entry name" value="PPIase_FKBP_dom"/>
</dbReference>
<dbReference type="InterPro" id="IPR005215">
    <property type="entry name" value="Trig_fac"/>
</dbReference>
<dbReference type="InterPro" id="IPR008880">
    <property type="entry name" value="Trigger_fac_C"/>
</dbReference>
<dbReference type="InterPro" id="IPR037041">
    <property type="entry name" value="Trigger_fac_C_sf"/>
</dbReference>
<dbReference type="InterPro" id="IPR008881">
    <property type="entry name" value="Trigger_fac_ribosome-bd_bac"/>
</dbReference>
<dbReference type="InterPro" id="IPR036611">
    <property type="entry name" value="Trigger_fac_ribosome-bd_sf"/>
</dbReference>
<dbReference type="InterPro" id="IPR027304">
    <property type="entry name" value="Trigger_fact/SurA_dom_sf"/>
</dbReference>
<dbReference type="NCBIfam" id="TIGR00115">
    <property type="entry name" value="tig"/>
    <property type="match status" value="1"/>
</dbReference>
<dbReference type="PANTHER" id="PTHR30560">
    <property type="entry name" value="TRIGGER FACTOR CHAPERONE AND PEPTIDYL-PROLYL CIS/TRANS ISOMERASE"/>
    <property type="match status" value="1"/>
</dbReference>
<dbReference type="PANTHER" id="PTHR30560:SF3">
    <property type="entry name" value="TRIGGER FACTOR-LIKE PROTEIN TIG, CHLOROPLASTIC"/>
    <property type="match status" value="1"/>
</dbReference>
<dbReference type="Pfam" id="PF00254">
    <property type="entry name" value="FKBP_C"/>
    <property type="match status" value="1"/>
</dbReference>
<dbReference type="Pfam" id="PF05698">
    <property type="entry name" value="Trigger_C"/>
    <property type="match status" value="1"/>
</dbReference>
<dbReference type="Pfam" id="PF05697">
    <property type="entry name" value="Trigger_N"/>
    <property type="match status" value="1"/>
</dbReference>
<dbReference type="PIRSF" id="PIRSF003095">
    <property type="entry name" value="Trigger_factor"/>
    <property type="match status" value="1"/>
</dbReference>
<dbReference type="SUPFAM" id="SSF54534">
    <property type="entry name" value="FKBP-like"/>
    <property type="match status" value="1"/>
</dbReference>
<dbReference type="SUPFAM" id="SSF109998">
    <property type="entry name" value="Triger factor/SurA peptide-binding domain-like"/>
    <property type="match status" value="1"/>
</dbReference>
<dbReference type="SUPFAM" id="SSF102735">
    <property type="entry name" value="Trigger factor ribosome-binding domain"/>
    <property type="match status" value="1"/>
</dbReference>
<dbReference type="PROSITE" id="PS50059">
    <property type="entry name" value="FKBP_PPIASE"/>
    <property type="match status" value="1"/>
</dbReference>
<gene>
    <name evidence="1" type="primary">tig</name>
    <name type="ordered locus">SERP1239</name>
</gene>
<keyword id="KW-0131">Cell cycle</keyword>
<keyword id="KW-0132">Cell division</keyword>
<keyword id="KW-0143">Chaperone</keyword>
<keyword id="KW-0963">Cytoplasm</keyword>
<keyword id="KW-0413">Isomerase</keyword>
<keyword id="KW-1185">Reference proteome</keyword>
<keyword id="KW-0697">Rotamase</keyword>